<feature type="chain" id="PRO_0000344085" description="Urease accessory protein UreF 1">
    <location>
        <begin position="1"/>
        <end position="228"/>
    </location>
</feature>
<comment type="function">
    <text evidence="1">Required for maturation of urease via the functional incorporation of the urease nickel metallocenter.</text>
</comment>
<comment type="function">
    <text evidence="2">Disruption of the ure1 gene cluster suggests that it protects brucellae during their passage through the stomach. The major route of infection in human brucellosis is oral.</text>
</comment>
<comment type="subunit">
    <text evidence="1">UreD, UreF and UreG form a complex that acts as a GTP-hydrolysis-dependent molecular chaperone, activating the urease apoprotein by helping to assemble the nickel containing metallocenter of UreC. The UreE protein probably delivers the nickel.</text>
</comment>
<comment type="subcellular location">
    <subcellularLocation>
        <location evidence="1">Cytoplasm</location>
    </subcellularLocation>
</comment>
<comment type="similarity">
    <text evidence="1">Belongs to the UreF family.</text>
</comment>
<dbReference type="EMBL" id="AF361941">
    <property type="protein sequence ID" value="AAK51071.1"/>
    <property type="molecule type" value="Genomic_DNA"/>
</dbReference>
<dbReference type="EMBL" id="AM040264">
    <property type="protein sequence ID" value="CAJ10258.1"/>
    <property type="molecule type" value="Genomic_DNA"/>
</dbReference>
<dbReference type="RefSeq" id="WP_002969031.1">
    <property type="nucleotide sequence ID" value="NZ_KN046823.1"/>
</dbReference>
<dbReference type="SMR" id="Q2YPD3"/>
<dbReference type="STRING" id="359391.BAB1_0302"/>
<dbReference type="KEGG" id="bmf:BAB1_0302"/>
<dbReference type="PATRIC" id="fig|359391.11.peg.2350"/>
<dbReference type="HOGENOM" id="CLU_049215_2_0_5"/>
<dbReference type="Proteomes" id="UP000002719">
    <property type="component" value="Chromosome I"/>
</dbReference>
<dbReference type="GO" id="GO:0005737">
    <property type="term" value="C:cytoplasm"/>
    <property type="evidence" value="ECO:0007669"/>
    <property type="project" value="UniProtKB-SubCell"/>
</dbReference>
<dbReference type="GO" id="GO:0016151">
    <property type="term" value="F:nickel cation binding"/>
    <property type="evidence" value="ECO:0007669"/>
    <property type="project" value="UniProtKB-UniRule"/>
</dbReference>
<dbReference type="Gene3D" id="1.10.4190.10">
    <property type="entry name" value="Urease accessory protein UreF"/>
    <property type="match status" value="1"/>
</dbReference>
<dbReference type="HAMAP" id="MF_01385">
    <property type="entry name" value="UreF"/>
    <property type="match status" value="1"/>
</dbReference>
<dbReference type="InterPro" id="IPR002639">
    <property type="entry name" value="UreF"/>
</dbReference>
<dbReference type="InterPro" id="IPR038277">
    <property type="entry name" value="UreF_sf"/>
</dbReference>
<dbReference type="PANTHER" id="PTHR33620">
    <property type="entry name" value="UREASE ACCESSORY PROTEIN F"/>
    <property type="match status" value="1"/>
</dbReference>
<dbReference type="PANTHER" id="PTHR33620:SF1">
    <property type="entry name" value="UREASE ACCESSORY PROTEIN F"/>
    <property type="match status" value="1"/>
</dbReference>
<dbReference type="Pfam" id="PF01730">
    <property type="entry name" value="UreF"/>
    <property type="match status" value="1"/>
</dbReference>
<dbReference type="PIRSF" id="PIRSF009467">
    <property type="entry name" value="Ureas_acces_UreF"/>
    <property type="match status" value="1"/>
</dbReference>
<accession>Q2YPD3</accession>
<accession>Q57F83</accession>
<accession>Q93T79</accession>
<organism>
    <name type="scientific">Brucella abortus (strain 2308)</name>
    <dbReference type="NCBI Taxonomy" id="359391"/>
    <lineage>
        <taxon>Bacteria</taxon>
        <taxon>Pseudomonadati</taxon>
        <taxon>Pseudomonadota</taxon>
        <taxon>Alphaproteobacteria</taxon>
        <taxon>Hyphomicrobiales</taxon>
        <taxon>Brucellaceae</taxon>
        <taxon>Brucella/Ochrobactrum group</taxon>
        <taxon>Brucella</taxon>
    </lineage>
</organism>
<reference key="1">
    <citation type="journal article" date="2007" name="Infect. Immun.">
        <title>Characterization of the urease operon of Brucella abortus and assessment of its role in virulence of the bacterium.</title>
        <authorList>
            <person name="Sangari F.J."/>
            <person name="Seoane A."/>
            <person name="Rodriguez M.C."/>
            <person name="Aguero J."/>
            <person name="Garcia Lobo J.M."/>
        </authorList>
    </citation>
    <scope>NUCLEOTIDE SEQUENCE [GENOMIC DNA]</scope>
    <scope>ROLE IN VIRULENCE</scope>
</reference>
<reference key="2">
    <citation type="journal article" date="2005" name="Infect. Immun.">
        <title>Whole-genome analyses of speciation events in pathogenic Brucellae.</title>
        <authorList>
            <person name="Chain P.S."/>
            <person name="Comerci D.J."/>
            <person name="Tolmasky M.E."/>
            <person name="Larimer F.W."/>
            <person name="Malfatti S.A."/>
            <person name="Vergez L.M."/>
            <person name="Aguero F."/>
            <person name="Land M.L."/>
            <person name="Ugalde R.A."/>
            <person name="Garcia E."/>
        </authorList>
    </citation>
    <scope>NUCLEOTIDE SEQUENCE [LARGE SCALE GENOMIC DNA]</scope>
    <source>
        <strain>2308</strain>
    </source>
</reference>
<evidence type="ECO:0000255" key="1">
    <source>
        <dbReference type="HAMAP-Rule" id="MF_01385"/>
    </source>
</evidence>
<evidence type="ECO:0000269" key="2">
    <source>
    </source>
</evidence>
<name>UREF1_BRUA2</name>
<keyword id="KW-0143">Chaperone</keyword>
<keyword id="KW-0963">Cytoplasm</keyword>
<keyword id="KW-0996">Nickel insertion</keyword>
<keyword id="KW-1185">Reference proteome</keyword>
<keyword id="KW-0843">Virulence</keyword>
<protein>
    <recommendedName>
        <fullName evidence="1">Urease accessory protein UreF 1</fullName>
    </recommendedName>
</protein>
<proteinExistence type="inferred from homology"/>
<sequence>MTIITPITNDPTTALLRLMAWLSPVFPVGSFSYSHGLERAVHDGLVVDAAGLQDWLQWLVRRGSGWNDAVLCAESWRCAMKGEDLHEIAELAEALAGSRERHMETMLQGGAFFAAARSWPCEIFDRLPPDCAYPVAVGAVAGGHGVPLAQALAAFLQAFCINLLQASIRLSVTGQSGVTAIMAALEPVLGETAARAALSSMEDLGSATFIADIMAMKHETQHSRLFRS</sequence>
<gene>
    <name evidence="1" type="primary">ureF1</name>
    <name type="ordered locus">BAB1_0302</name>
</gene>